<sequence length="684" mass="71292">MLDKLNQPKGSTIGVLKDGRTIQEAFDSLGYLGVAVLSPANYGAKGDGKADDTIPLRQCVQDACALGGRVVGTVGAEYKISGTIAGTVGDGKYVELDFTGSKFVPTTDDAVMTITGVATSPVAEVTVEVVSVNLGNGSTNTIAMKVTAPGGHSFTKKGEIGKAWSPVLCLNNDLSTQYAGEPFVVGLVESSTVFYTTSVFTELYMGTSLKVIRVPTTQVVVKGLDVESEWTTGWKASTLTLSGLLRPFVYKPKCKNINGPFVNLTGCYGATVFLPEGDNLRNAPSEGAYGYFVNDSASFGSTIYGINCTNARHAYTTSSPRSEPTDDKWWLKGRTLFSEITNGLGTGCHNAFDTHSPSYGIKFTNCRAVGDFRGVDTGGAGFQIRGDRSSLVDCTAINSKIGAAFTAVNISGNSELYISGFTYEGPAGHLALSLSGKAGQINRVTISDSRWKTLEQYATAITNVEVSASNVEAVVDSATTASAAWRIGEGATLRTRGGAARFSAGSGHSVISLAASGAKVDVGDLEVTGSSFMQYLLATLSQYAGDVYIEADLDGALPGNPVGGGGTDLKAAVVYTAGNKFRRPLAYRALTIGNANGNTLGLNYSGHDVITWEITATVAGANVNGITPGAFIGQQLNIGSSPASTQQLIIKNGTNIAMGHAVTLEAGRGVTLYWNGANWRSGSV</sequence>
<accession>A0A219YHF3</accession>
<reference key="1">
    <citation type="journal article" date="2017" name="Sci. Rep.">
        <title>Two T7-like Bacteriophages, K5-2 and K5-4, Each Encodes Two Capsule Depolymerases: Isolation and Functional Characterization.</title>
        <authorList>
            <person name="Hsieh P.F."/>
            <person name="Lin H.H."/>
            <person name="Lin T.L."/>
            <person name="Chen Y.Y."/>
            <person name="Wang J.T."/>
        </authorList>
    </citation>
    <scope>NUCLEOTIDE SEQUENCE [LARGE SCALE GENOMIC DNA]</scope>
    <scope>FUNCTION</scope>
</reference>
<reference key="2">
    <citation type="journal article" date="2019" name="Front. Microbiol.">
        <title>Modeling the Architecture of Depolymerase-Containing Receptor Binding Proteins in Klebsiella Phages.</title>
        <authorList>
            <person name="Latka A."/>
            <person name="Leiman P.G."/>
            <person name="Drulis-Kawa Z."/>
            <person name="Briers Y."/>
        </authorList>
    </citation>
    <scope>REVIEW</scope>
</reference>
<organism>
    <name type="scientific">Klebsiella phage K5-4</name>
    <name type="common">Bacteriophage K5-4</name>
    <dbReference type="NCBI Taxonomy" id="1932362"/>
    <lineage>
        <taxon>Viruses</taxon>
        <taxon>Duplodnaviria</taxon>
        <taxon>Heunggongvirae</taxon>
        <taxon>Uroviricota</taxon>
        <taxon>Caudoviricetes</taxon>
        <taxon>Autographiviridae</taxon>
        <taxon>Studiervirinae</taxon>
        <taxon>Przondovirus</taxon>
        <taxon>Przondovirus K54</taxon>
    </lineage>
</organism>
<keyword id="KW-1238">Degradation of host capsule during virus entry</keyword>
<keyword id="KW-1235">Degradation of host cell envelope components during virus entry</keyword>
<keyword id="KW-0945">Host-virus interaction</keyword>
<keyword id="KW-1233">Viral attachment to host adhesion receptor</keyword>
<keyword id="KW-1161">Viral attachment to host cell</keyword>
<keyword id="KW-1227">Viral tail protein</keyword>
<keyword id="KW-0946">Virion</keyword>
<keyword id="KW-1160">Virus entry into host cell</keyword>
<dbReference type="EMBL" id="KY389316">
    <property type="protein sequence ID" value="APZ82848.1"/>
    <property type="molecule type" value="Genomic_DNA"/>
</dbReference>
<dbReference type="SMR" id="A0A219YHF3"/>
<dbReference type="Proteomes" id="UP000223201">
    <property type="component" value="Genome"/>
</dbReference>
<dbReference type="GO" id="GO:0098015">
    <property type="term" value="C:virus tail"/>
    <property type="evidence" value="ECO:0007669"/>
    <property type="project" value="UniProtKB-KW"/>
</dbReference>
<dbReference type="GO" id="GO:0098671">
    <property type="term" value="P:adhesion receptor-mediated virion attachment to host cell"/>
    <property type="evidence" value="ECO:0007669"/>
    <property type="project" value="UniProtKB-KW"/>
</dbReference>
<dbReference type="GO" id="GO:0098994">
    <property type="term" value="P:symbiont entry into host cell via disruption of host cell envelope"/>
    <property type="evidence" value="ECO:0007669"/>
    <property type="project" value="UniProtKB-KW"/>
</dbReference>
<dbReference type="GO" id="GO:0098996">
    <property type="term" value="P:symbiont entry into host cell via disruption of host cell glycocalyx"/>
    <property type="evidence" value="ECO:0000314"/>
    <property type="project" value="UniProtKB"/>
</dbReference>
<dbReference type="Gene3D" id="2.160.20.10">
    <property type="entry name" value="Single-stranded right-handed beta-helix, Pectin lyase-like"/>
    <property type="match status" value="1"/>
</dbReference>
<dbReference type="InterPro" id="IPR012334">
    <property type="entry name" value="Pectin_lyas_fold"/>
</dbReference>
<dbReference type="InterPro" id="IPR011050">
    <property type="entry name" value="Pectin_lyase_fold/virulence"/>
</dbReference>
<dbReference type="SUPFAM" id="SSF51126">
    <property type="entry name" value="Pectin lyase-like"/>
    <property type="match status" value="1"/>
</dbReference>
<name>DPOL2_BPK54</name>
<feature type="chain" id="PRO_0000458716" description="Depolymerase 2, capsule K5-specific">
    <location>
        <begin position="1"/>
        <end position="684"/>
    </location>
</feature>
<proteinExistence type="inferred from homology"/>
<evidence type="ECO:0000250" key="1">
    <source>
        <dbReference type="UniProtKB" id="D1L2X1"/>
    </source>
</evidence>
<evidence type="ECO:0000269" key="2">
    <source>
    </source>
</evidence>
<evidence type="ECO:0000305" key="3"/>
<evidence type="ECO:0000305" key="4">
    <source>
    </source>
</evidence>
<evidence type="ECO:0000312" key="5">
    <source>
        <dbReference type="EMBL" id="APZ82848.1"/>
    </source>
</evidence>
<protein>
    <recommendedName>
        <fullName evidence="3">Depolymerase 2, capsule K5-specific</fullName>
    </recommendedName>
    <alternativeName>
        <fullName evidence="3">Gene product 38</fullName>
        <shortName evidence="3">gp38</shortName>
    </alternativeName>
    <alternativeName>
        <fullName>K5 depolymerase</fullName>
    </alternativeName>
    <alternativeName>
        <fullName evidence="3">Probable tail spike protein</fullName>
    </alternativeName>
</protein>
<gene>
    <name evidence="5" type="ORF">k54_038</name>
</gene>
<comment type="function">
    <text evidence="2 4">Functions as a receptor binding protein (RBP) and probably mediates the attachment to the host capsular exopolysaccharides (Probable). Displays a depolymerase activity that specifically degrades the K5-type polysaccharides of Klebsiella pneumoniae capsule, which allows the phage to reach the host cell membrane and bind the entry receptor (PubMed:28676686).</text>
</comment>
<comment type="subunit">
    <text evidence="1">Homotrimer. Interacts (via N-terminus) with depolymerase 1 (via N-terminus); this interaction probably gives rise to a branched tailspike.</text>
</comment>
<comment type="subcellular location">
    <subcellularLocation>
        <location evidence="1">Virion</location>
    </subcellularLocation>
    <text evidence="1">Tail appendage. Depolymerase 1 is connected to the phage tail via an N-terminal anchor domain, while depolymerase 2 is attached to depolymerase 1.</text>
</comment>
<comment type="similarity">
    <text evidence="3">In the N-terminal section; belongs to the Przondovirus depolymerase 2 family.</text>
</comment>
<organismHost>
    <name type="scientific">Klebsiella</name>
    <dbReference type="NCBI Taxonomy" id="570"/>
</organismHost>